<comment type="function">
    <text evidence="11 13">Prenyltransferase that mediates the formation of menaquinone-4 (MK-4) and coenzyme Q10 (PubMed:20953171, PubMed:23374346). MK-4 is a vitamin K2 isoform present at high concentrations in the brain, kidney and pancreas, and is required for endothelial cell development (PubMed:20953171). Mediates the conversion of phylloquinone (PK) into MK-4, probably by cleaving the side chain of phylloquinone (PK) to release 2-methyl-1,4-naphthoquinone (menadione; K3) and then prenylating it with geranylgeranyl pyrophosphate (GGPP) to form MK-4 (PubMed:20953171). Also plays a role in cardiovascular development independently of MK-4 biosynthesis, by acting as a coenzyme Q10 biosynthetic enzyme: coenzyme Q10, also named ubiquinone, plays an important antioxidant role in the cardiovascular system (PubMed:23374346). Mediates biosynthesis of coenzyme Q10 in the Golgi membrane, leading to protect cardiovascular tissues from NOS3/eNOS-dependent oxidative stress (PubMed:23374346).</text>
</comment>
<comment type="catalytic activity">
    <reaction evidence="11">
        <text>menadiol + (2E,6E,10E)-geranylgeranyl diphosphate = menaquinol-4 + diphosphate</text>
        <dbReference type="Rhea" id="RHEA:74083"/>
        <dbReference type="ChEBI" id="CHEBI:6746"/>
        <dbReference type="ChEBI" id="CHEBI:33019"/>
        <dbReference type="ChEBI" id="CHEBI:58756"/>
        <dbReference type="ChEBI" id="CHEBI:193091"/>
    </reaction>
    <physiologicalReaction direction="left-to-right" evidence="11">
        <dbReference type="Rhea" id="RHEA:74084"/>
    </physiologicalReaction>
</comment>
<comment type="catalytic activity">
    <reaction evidence="19">
        <text>all-trans-decaprenyl diphosphate + 4-hydroxybenzoate = 4-hydroxy-3-(all-trans-decaprenyl)benzoate + diphosphate</text>
        <dbReference type="Rhea" id="RHEA:44564"/>
        <dbReference type="ChEBI" id="CHEBI:17879"/>
        <dbReference type="ChEBI" id="CHEBI:33019"/>
        <dbReference type="ChEBI" id="CHEBI:60721"/>
        <dbReference type="ChEBI" id="CHEBI:84503"/>
        <dbReference type="EC" id="2.5.1.39"/>
    </reaction>
    <physiologicalReaction direction="left-to-right" evidence="19">
        <dbReference type="Rhea" id="RHEA:44565"/>
    </physiologicalReaction>
</comment>
<comment type="pathway">
    <text evidence="11">Quinol/quinone metabolism; menaquinone biosynthesis.</text>
</comment>
<comment type="pathway">
    <text evidence="11">Cofactor biosynthesis; ubiquinone biosynthesis.</text>
</comment>
<comment type="subunit">
    <text evidence="12">Interacts with HMGCR and SOAT1.</text>
</comment>
<comment type="interaction">
    <interactant intactId="EBI-2819725">
        <id>Q9Y5Z9</id>
    </interactant>
    <interactant intactId="EBI-12078468">
        <id>Q8IVF2-3</id>
        <label>AHNAK2</label>
    </interactant>
    <organismsDiffer>false</organismsDiffer>
    <experiments>3</experiments>
</comment>
<comment type="interaction">
    <interactant intactId="EBI-2819725">
        <id>Q9Y5Z9</id>
    </interactant>
    <interactant intactId="EBI-12808270">
        <id>P07307-3</id>
        <label>ASGR2</label>
    </interactant>
    <organismsDiffer>false</organismsDiffer>
    <experiments>3</experiments>
</comment>
<comment type="interaction">
    <interactant intactId="EBI-2819725">
        <id>Q9Y5Z9</id>
    </interactant>
    <interactant intactId="EBI-700794">
        <id>Q13323</id>
        <label>BIK</label>
    </interactant>
    <organismsDiffer>false</organismsDiffer>
    <experiments>3</experiments>
</comment>
<comment type="interaction">
    <interactant intactId="EBI-2819725">
        <id>Q9Y5Z9</id>
    </interactant>
    <interactant intactId="EBI-3906571">
        <id>P20138</id>
        <label>CD33</label>
    </interactant>
    <organismsDiffer>false</organismsDiffer>
    <experiments>3</experiments>
</comment>
<comment type="interaction">
    <interactant intactId="EBI-2819725">
        <id>Q9Y5Z9</id>
    </interactant>
    <interactant intactId="EBI-6657396">
        <id>P19397</id>
        <label>CD53</label>
    </interactant>
    <organismsDiffer>false</organismsDiffer>
    <experiments>3</experiments>
</comment>
<comment type="interaction">
    <interactant intactId="EBI-2819725">
        <id>Q9Y5Z9</id>
    </interactant>
    <interactant intactId="EBI-7797864">
        <id>P11912</id>
        <label>CD79A</label>
    </interactant>
    <organismsDiffer>false</organismsDiffer>
    <experiments>3</experiments>
</comment>
<comment type="interaction">
    <interactant intactId="EBI-2819725">
        <id>Q9Y5Z9</id>
    </interactant>
    <interactant intactId="EBI-740744">
        <id>O95471</id>
        <label>CLDN7</label>
    </interactant>
    <organismsDiffer>false</organismsDiffer>
    <experiments>3</experiments>
</comment>
<comment type="interaction">
    <interactant intactId="EBI-2819725">
        <id>Q9Y5Z9</id>
    </interactant>
    <interactant intactId="EBI-18013275">
        <id>Q7Z7G2</id>
        <label>CPLX4</label>
    </interactant>
    <organismsDiffer>false</organismsDiffer>
    <experiments>3</experiments>
</comment>
<comment type="interaction">
    <interactant intactId="EBI-2819725">
        <id>Q9Y5Z9</id>
    </interactant>
    <interactant intactId="EBI-17233035">
        <id>Q9BUF7-2</id>
        <label>CRB3</label>
    </interactant>
    <organismsDiffer>false</organismsDiffer>
    <experiments>3</experiments>
</comment>
<comment type="interaction">
    <interactant intactId="EBI-2819725">
        <id>Q9Y5Z9</id>
    </interactant>
    <interactant intactId="EBI-6942903">
        <id>Q96BA8</id>
        <label>CREB3L1</label>
    </interactant>
    <organismsDiffer>false</organismsDiffer>
    <experiments>3</experiments>
</comment>
<comment type="interaction">
    <interactant intactId="EBI-2819725">
        <id>Q9Y5Z9</id>
    </interactant>
    <interactant intactId="EBI-1046040">
        <id>P00387</id>
        <label>CYB5R3</label>
    </interactant>
    <organismsDiffer>false</organismsDiffer>
    <experiments>3</experiments>
</comment>
<comment type="interaction">
    <interactant intactId="EBI-2819725">
        <id>Q9Y5Z9</id>
    </interactant>
    <interactant intactId="EBI-3915253">
        <id>Q15125</id>
        <label>EBP</label>
    </interactant>
    <organismsDiffer>false</organismsDiffer>
    <experiments>3</experiments>
</comment>
<comment type="interaction">
    <interactant intactId="EBI-2819725">
        <id>Q9Y5Z9</id>
    </interactant>
    <interactant intactId="EBI-781551">
        <id>Q9Y282</id>
        <label>ERGIC3</label>
    </interactant>
    <organismsDiffer>false</organismsDiffer>
    <experiments>3</experiments>
</comment>
<comment type="interaction">
    <interactant intactId="EBI-2819725">
        <id>Q9Y5Z9</id>
    </interactant>
    <interactant intactId="EBI-2870359">
        <id>P22794</id>
        <label>EVI2A</label>
    </interactant>
    <organismsDiffer>false</organismsDiffer>
    <experiments>3</experiments>
</comment>
<comment type="interaction">
    <interactant intactId="EBI-2819725">
        <id>Q9Y5Z9</id>
    </interactant>
    <interactant intactId="EBI-17640610">
        <id>P34910-2</id>
        <label>EVI2B</label>
    </interactant>
    <organismsDiffer>false</organismsDiffer>
    <experiments>3</experiments>
</comment>
<comment type="interaction">
    <interactant intactId="EBI-2819725">
        <id>Q9Y5Z9</id>
    </interactant>
    <interactant intactId="EBI-18304435">
        <id>Q5JX71</id>
        <label>FAM209A</label>
    </interactant>
    <organismsDiffer>false</organismsDiffer>
    <experiments>3</experiments>
</comment>
<comment type="interaction">
    <interactant intactId="EBI-2819725">
        <id>Q9Y5Z9</id>
    </interactant>
    <interactant intactId="EBI-3918971">
        <id>Q9Y680</id>
        <label>FKBP7</label>
    </interactant>
    <organismsDiffer>false</organismsDiffer>
    <experiments>3</experiments>
</comment>
<comment type="interaction">
    <interactant intactId="EBI-2819725">
        <id>Q9Y5Z9</id>
    </interactant>
    <interactant intactId="EBI-12142257">
        <id>Q8TBE3</id>
        <label>FNDC9</label>
    </interactant>
    <organismsDiffer>false</organismsDiffer>
    <experiments>3</experiments>
</comment>
<comment type="interaction">
    <interactant intactId="EBI-2819725">
        <id>Q9Y5Z9</id>
    </interactant>
    <interactant intactId="EBI-13345167">
        <id>Q8TDT2</id>
        <label>GPR152</label>
    </interactant>
    <organismsDiffer>false</organismsDiffer>
    <experiments>3</experiments>
</comment>
<comment type="interaction">
    <interactant intactId="EBI-2819725">
        <id>Q9Y5Z9</id>
    </interactant>
    <interactant intactId="EBI-11427100">
        <id>P31937</id>
        <label>HIBADH</label>
    </interactant>
    <organismsDiffer>false</organismsDiffer>
    <experiments>3</experiments>
</comment>
<comment type="interaction">
    <interactant intactId="EBI-2819725">
        <id>Q9Y5Z9</id>
    </interactant>
    <interactant intactId="EBI-465513">
        <id>P04035</id>
        <label>HMGCR</label>
    </interactant>
    <organismsDiffer>false</organismsDiffer>
    <experiments>4</experiments>
</comment>
<comment type="interaction">
    <interactant intactId="EBI-2819725">
        <id>Q9Y5Z9</id>
    </interactant>
    <interactant intactId="EBI-350145">
        <id>P01112</id>
        <label>HRAS</label>
    </interactant>
    <organismsDiffer>false</organismsDiffer>
    <experiments>9</experiments>
</comment>
<comment type="interaction">
    <interactant intactId="EBI-2819725">
        <id>Q9Y5Z9</id>
    </interactant>
    <interactant intactId="EBI-12017638">
        <id>P48051</id>
        <label>KCNJ6</label>
    </interactant>
    <organismsDiffer>false</organismsDiffer>
    <experiments>3</experiments>
</comment>
<comment type="interaction">
    <interactant intactId="EBI-2819725">
        <id>Q9Y5Z9</id>
    </interactant>
    <interactant intactId="EBI-2820517">
        <id>Q8TAF8</id>
        <label>LHFPL5</label>
    </interactant>
    <organismsDiffer>false</organismsDiffer>
    <experiments>3</experiments>
</comment>
<comment type="interaction">
    <interactant intactId="EBI-2819725">
        <id>Q9Y5Z9</id>
    </interactant>
    <interactant intactId="EBI-724754">
        <id>O14880</id>
        <label>MGST3</label>
    </interactant>
    <organismsDiffer>false</organismsDiffer>
    <experiments>3</experiments>
</comment>
<comment type="interaction">
    <interactant intactId="EBI-2819725">
        <id>Q9Y5Z9</id>
    </interactant>
    <interactant intactId="EBI-1045440">
        <id>Q9HC36</id>
        <label>MRM3</label>
    </interactant>
    <organismsDiffer>false</organismsDiffer>
    <experiments>3</experiments>
</comment>
<comment type="interaction">
    <interactant intactId="EBI-2819725">
        <id>Q9Y5Z9</id>
    </interactant>
    <interactant intactId="EBI-10247000">
        <id>Q6IBW4-4</id>
        <label>NCAPH2</label>
    </interactant>
    <organismsDiffer>false</organismsDiffer>
    <experiments>3</experiments>
</comment>
<comment type="interaction">
    <interactant intactId="EBI-2819725">
        <id>Q9Y5Z9</id>
    </interactant>
    <interactant intactId="EBI-717068">
        <id>Q96KR7</id>
        <label>PHACTR3</label>
    </interactant>
    <organismsDiffer>false</organismsDiffer>
    <experiments>3</experiments>
</comment>
<comment type="interaction">
    <interactant intactId="EBI-2819725">
        <id>Q9Y5Z9</id>
    </interactant>
    <interactant intactId="EBI-17630288">
        <id>P57054</id>
        <label>PIGP</label>
    </interactant>
    <organismsDiffer>false</organismsDiffer>
    <experiments>3</experiments>
</comment>
<comment type="interaction">
    <interactant intactId="EBI-2819725">
        <id>Q9Y5Z9</id>
    </interactant>
    <interactant intactId="EBI-7545592">
        <id>Q9H6H4</id>
        <label>REEP4</label>
    </interactant>
    <organismsDiffer>false</organismsDiffer>
    <experiments>3</experiments>
</comment>
<comment type="interaction">
    <interactant intactId="EBI-2819725">
        <id>Q9Y5Z9</id>
    </interactant>
    <interactant intactId="EBI-10192441">
        <id>Q86VR2</id>
        <label>RETREG3</label>
    </interactant>
    <organismsDiffer>false</organismsDiffer>
    <experiments>3</experiments>
</comment>
<comment type="interaction">
    <interactant intactId="EBI-2819725">
        <id>Q9Y5Z9</id>
    </interactant>
    <interactant intactId="EBI-3920694">
        <id>Q9NR31</id>
        <label>SAR1A</label>
    </interactant>
    <organismsDiffer>false</organismsDiffer>
    <experiments>3</experiments>
</comment>
<comment type="interaction">
    <interactant intactId="EBI-2819725">
        <id>Q9Y5Z9</id>
    </interactant>
    <interactant intactId="EBI-17247926">
        <id>Q9NY72</id>
        <label>SCN3B</label>
    </interactant>
    <organismsDiffer>false</organismsDiffer>
    <experiments>3</experiments>
</comment>
<comment type="interaction">
    <interactant intactId="EBI-2819725">
        <id>Q9Y5Z9</id>
    </interactant>
    <interactant intactId="EBI-5235586">
        <id>Q8TBB6</id>
        <label>SLC7A14</label>
    </interactant>
    <organismsDiffer>false</organismsDiffer>
    <experiments>3</experiments>
</comment>
<comment type="interaction">
    <interactant intactId="EBI-2819725">
        <id>Q9Y5Z9</id>
    </interactant>
    <interactant intactId="EBI-6621955">
        <id>P35610</id>
        <label>SOAT1</label>
    </interactant>
    <organismsDiffer>false</organismsDiffer>
    <experiments>2</experiments>
</comment>
<comment type="interaction">
    <interactant intactId="EBI-2819725">
        <id>Q9Y5Z9</id>
    </interactant>
    <interactant intactId="EBI-6621997">
        <id>P35610-1</id>
        <label>SOAT1</label>
    </interactant>
    <organismsDiffer>false</organismsDiffer>
    <experiments>3</experiments>
</comment>
<comment type="interaction">
    <interactant intactId="EBI-2819725">
        <id>Q9Y5Z9</id>
    </interactant>
    <interactant intactId="EBI-524909">
        <id>P21579</id>
        <label>SYT1</label>
    </interactant>
    <organismsDiffer>false</organismsDiffer>
    <experiments>3</experiments>
</comment>
<comment type="interaction">
    <interactant intactId="EBI-2819725">
        <id>Q9Y5Z9</id>
    </interactant>
    <interactant intactId="EBI-11423693">
        <id>Q9UIK5</id>
        <label>TMEFF2</label>
    </interactant>
    <organismsDiffer>false</organismsDiffer>
    <experiments>3</experiments>
</comment>
<comment type="interaction">
    <interactant intactId="EBI-2819725">
        <id>Q9Y5Z9</id>
    </interactant>
    <interactant intactId="EBI-7238458">
        <id>Q8IV31</id>
        <label>TMEM139</label>
    </interactant>
    <organismsDiffer>false</organismsDiffer>
    <experiments>3</experiments>
</comment>
<comment type="interaction">
    <interactant intactId="EBI-2819725">
        <id>Q9Y5Z9</id>
    </interactant>
    <interactant intactId="EBI-8638294">
        <id>Q9NUH8</id>
        <label>TMEM14B</label>
    </interactant>
    <organismsDiffer>false</organismsDiffer>
    <experiments>3</experiments>
</comment>
<comment type="interaction">
    <interactant intactId="EBI-6621921">
        <id>Q9Y5Z9-1</id>
    </interactant>
    <interactant intactId="EBI-465513">
        <id>P04035</id>
        <label>HMGCR</label>
    </interactant>
    <organismsDiffer>false</organismsDiffer>
    <experiments>5</experiments>
</comment>
<comment type="subcellular location">
    <subcellularLocation>
        <location evidence="11">Endoplasmic reticulum membrane</location>
        <topology evidence="1">Multi-pass membrane protein</topology>
    </subcellularLocation>
    <subcellularLocation>
        <location evidence="13">Golgi apparatus membrane</location>
        <topology evidence="1">Multi-pass membrane protein</topology>
    </subcellularLocation>
    <subcellularLocation>
        <location evidence="10">Mitochondrion membrane</location>
        <topology evidence="1">Multi-pass membrane protein</topology>
    </subcellularLocation>
    <subcellularLocation>
        <location evidence="2">Cytoplasm</location>
    </subcellularLocation>
    <subcellularLocation>
        <location evidence="2 3">Nucleus</location>
    </subcellularLocation>
</comment>
<comment type="alternative products">
    <event type="alternative splicing"/>
    <isoform>
        <id>Q9Y5Z9-1</id>
        <name>1</name>
        <sequence type="displayed"/>
    </isoform>
    <isoform>
        <id>Q9Y5Z9-2</id>
        <name>2</name>
        <sequence type="described" ref="VSP_019455 VSP_019456"/>
    </isoform>
</comment>
<comment type="tissue specificity">
    <text evidence="2">Ubiquitously expressed.</text>
</comment>
<comment type="disease" evidence="4 5 6 7 8 9 10 12 13">
    <disease id="DI-01457">
        <name>Corneal dystrophy, Schnyder type</name>
        <acronym>SCCD</acronym>
        <description>A form of stromal corneal dystrophy characterized by corneal clouding, resulting from abnormal deposition of cholesterol and phospholipids, and decreased visual acuity. Typically, ring-shaped yellow-white opacities composed of innumerable fine needle-shaped crystals form in Bowman layer and the adjacent anterior stroma of the central cornea. The crystals usually remain in the anterior third of the cornea. The corneal epithelium and endothelium as well as Descemet membrane are spared.</description>
        <dbReference type="MIM" id="121800"/>
    </disease>
    <text>The disease is caused by variants affecting the gene represented in this entry.</text>
</comment>
<comment type="miscellaneous">
    <text evidence="17 18">Strongly down-regulated in transitional cell carcinoma of the bladder and in prostate carcinoma (at protein level) (PubMed:11314041, PubMed:12497587).</text>
</comment>
<comment type="similarity">
    <text evidence="16">Belongs to the UbiA prenyltransferase family.</text>
</comment>
<reference key="1">
    <citation type="journal article" date="2001" name="Oncogene">
        <title>Isolation and characterization of the TERE1 gene, a gene down-regulated in transitional cell carcinoma of the bladder.</title>
        <authorList>
            <person name="McGarvey T.W."/>
            <person name="Nguyen T."/>
            <person name="Tomaszewski J.E."/>
            <person name="Monson F.C."/>
            <person name="Malkowicz S.B."/>
        </authorList>
    </citation>
    <scope>NUCLEOTIDE SEQUENCE [MRNA] (ISOFORM 1)</scope>
    <scope>TISSUE SPECIFICITY</scope>
    <scope>SUBCELLULAR LOCATION</scope>
    <source>
        <tissue>Spleen</tissue>
    </source>
</reference>
<reference key="2">
    <citation type="submission" date="2003-05" db="EMBL/GenBank/DDBJ databases">
        <title>Cloning of human full-length CDSs in BD Creator(TM) system donor vector.</title>
        <authorList>
            <person name="Kalnine N."/>
            <person name="Chen X."/>
            <person name="Rolfs A."/>
            <person name="Halleck A."/>
            <person name="Hines L."/>
            <person name="Eisenstein S."/>
            <person name="Koundinya M."/>
            <person name="Raphael J."/>
            <person name="Moreira D."/>
            <person name="Kelley T."/>
            <person name="LaBaer J."/>
            <person name="Lin Y."/>
            <person name="Phelan M."/>
            <person name="Farmer A."/>
        </authorList>
    </citation>
    <scope>NUCLEOTIDE SEQUENCE [LARGE SCALE MRNA] (ISOFORM 1)</scope>
</reference>
<reference key="3">
    <citation type="submission" date="2005-04" db="EMBL/GenBank/DDBJ databases">
        <authorList>
            <person name="Suzuki Y."/>
            <person name="Sugano S."/>
            <person name="Totoki Y."/>
            <person name="Toyoda A."/>
            <person name="Takeda T."/>
            <person name="Sakaki Y."/>
            <person name="Tanaka A."/>
            <person name="Yokoyama S."/>
        </authorList>
    </citation>
    <scope>NUCLEOTIDE SEQUENCE [LARGE SCALE MRNA] (ISOFORM 1)</scope>
    <source>
        <tissue>Liver</tissue>
    </source>
</reference>
<reference key="4">
    <citation type="journal article" date="2005" name="DNA Res.">
        <title>Signal sequence and keyword trap in silico for selection of full-length human cDNAs encoding secretion or membrane proteins from oligo-capped cDNA libraries.</title>
        <authorList>
            <person name="Otsuki T."/>
            <person name="Ota T."/>
            <person name="Nishikawa T."/>
            <person name="Hayashi K."/>
            <person name="Suzuki Y."/>
            <person name="Yamamoto J."/>
            <person name="Wakamatsu A."/>
            <person name="Kimura K."/>
            <person name="Sakamoto K."/>
            <person name="Hatano N."/>
            <person name="Kawai Y."/>
            <person name="Ishii S."/>
            <person name="Saito K."/>
            <person name="Kojima S."/>
            <person name="Sugiyama T."/>
            <person name="Ono T."/>
            <person name="Okano K."/>
            <person name="Yoshikawa Y."/>
            <person name="Aotsuka S."/>
            <person name="Sasaki N."/>
            <person name="Hattori A."/>
            <person name="Okumura K."/>
            <person name="Nagai K."/>
            <person name="Sugano S."/>
            <person name="Isogai T."/>
        </authorList>
    </citation>
    <scope>NUCLEOTIDE SEQUENCE [LARGE SCALE MRNA] (ISOFORM 1)</scope>
</reference>
<reference key="5">
    <citation type="journal article" date="2006" name="Nature">
        <title>The DNA sequence and biological annotation of human chromosome 1.</title>
        <authorList>
            <person name="Gregory S.G."/>
            <person name="Barlow K.F."/>
            <person name="McLay K.E."/>
            <person name="Kaul R."/>
            <person name="Swarbreck D."/>
            <person name="Dunham A."/>
            <person name="Scott C.E."/>
            <person name="Howe K.L."/>
            <person name="Woodfine K."/>
            <person name="Spencer C.C.A."/>
            <person name="Jones M.C."/>
            <person name="Gillson C."/>
            <person name="Searle S."/>
            <person name="Zhou Y."/>
            <person name="Kokocinski F."/>
            <person name="McDonald L."/>
            <person name="Evans R."/>
            <person name="Phillips K."/>
            <person name="Atkinson A."/>
            <person name="Cooper R."/>
            <person name="Jones C."/>
            <person name="Hall R.E."/>
            <person name="Andrews T.D."/>
            <person name="Lloyd C."/>
            <person name="Ainscough R."/>
            <person name="Almeida J.P."/>
            <person name="Ambrose K.D."/>
            <person name="Anderson F."/>
            <person name="Andrew R.W."/>
            <person name="Ashwell R.I.S."/>
            <person name="Aubin K."/>
            <person name="Babbage A.K."/>
            <person name="Bagguley C.L."/>
            <person name="Bailey J."/>
            <person name="Beasley H."/>
            <person name="Bethel G."/>
            <person name="Bird C.P."/>
            <person name="Bray-Allen S."/>
            <person name="Brown J.Y."/>
            <person name="Brown A.J."/>
            <person name="Buckley D."/>
            <person name="Burton J."/>
            <person name="Bye J."/>
            <person name="Carder C."/>
            <person name="Chapman J.C."/>
            <person name="Clark S.Y."/>
            <person name="Clarke G."/>
            <person name="Clee C."/>
            <person name="Cobley V."/>
            <person name="Collier R.E."/>
            <person name="Corby N."/>
            <person name="Coville G.J."/>
            <person name="Davies J."/>
            <person name="Deadman R."/>
            <person name="Dunn M."/>
            <person name="Earthrowl M."/>
            <person name="Ellington A.G."/>
            <person name="Errington H."/>
            <person name="Frankish A."/>
            <person name="Frankland J."/>
            <person name="French L."/>
            <person name="Garner P."/>
            <person name="Garnett J."/>
            <person name="Gay L."/>
            <person name="Ghori M.R.J."/>
            <person name="Gibson R."/>
            <person name="Gilby L.M."/>
            <person name="Gillett W."/>
            <person name="Glithero R.J."/>
            <person name="Grafham D.V."/>
            <person name="Griffiths C."/>
            <person name="Griffiths-Jones S."/>
            <person name="Grocock R."/>
            <person name="Hammond S."/>
            <person name="Harrison E.S.I."/>
            <person name="Hart E."/>
            <person name="Haugen E."/>
            <person name="Heath P.D."/>
            <person name="Holmes S."/>
            <person name="Holt K."/>
            <person name="Howden P.J."/>
            <person name="Hunt A.R."/>
            <person name="Hunt S.E."/>
            <person name="Hunter G."/>
            <person name="Isherwood J."/>
            <person name="James R."/>
            <person name="Johnson C."/>
            <person name="Johnson D."/>
            <person name="Joy A."/>
            <person name="Kay M."/>
            <person name="Kershaw J.K."/>
            <person name="Kibukawa M."/>
            <person name="Kimberley A.M."/>
            <person name="King A."/>
            <person name="Knights A.J."/>
            <person name="Lad H."/>
            <person name="Laird G."/>
            <person name="Lawlor S."/>
            <person name="Leongamornlert D.A."/>
            <person name="Lloyd D.M."/>
            <person name="Loveland J."/>
            <person name="Lovell J."/>
            <person name="Lush M.J."/>
            <person name="Lyne R."/>
            <person name="Martin S."/>
            <person name="Mashreghi-Mohammadi M."/>
            <person name="Matthews L."/>
            <person name="Matthews N.S.W."/>
            <person name="McLaren S."/>
            <person name="Milne S."/>
            <person name="Mistry S."/>
            <person name="Moore M.J.F."/>
            <person name="Nickerson T."/>
            <person name="O'Dell C.N."/>
            <person name="Oliver K."/>
            <person name="Palmeiri A."/>
            <person name="Palmer S.A."/>
            <person name="Parker A."/>
            <person name="Patel D."/>
            <person name="Pearce A.V."/>
            <person name="Peck A.I."/>
            <person name="Pelan S."/>
            <person name="Phelps K."/>
            <person name="Phillimore B.J."/>
            <person name="Plumb R."/>
            <person name="Rajan J."/>
            <person name="Raymond C."/>
            <person name="Rouse G."/>
            <person name="Saenphimmachak C."/>
            <person name="Sehra H.K."/>
            <person name="Sheridan E."/>
            <person name="Shownkeen R."/>
            <person name="Sims S."/>
            <person name="Skuce C.D."/>
            <person name="Smith M."/>
            <person name="Steward C."/>
            <person name="Subramanian S."/>
            <person name="Sycamore N."/>
            <person name="Tracey A."/>
            <person name="Tromans A."/>
            <person name="Van Helmond Z."/>
            <person name="Wall M."/>
            <person name="Wallis J.M."/>
            <person name="White S."/>
            <person name="Whitehead S.L."/>
            <person name="Wilkinson J.E."/>
            <person name="Willey D.L."/>
            <person name="Williams H."/>
            <person name="Wilming L."/>
            <person name="Wray P.W."/>
            <person name="Wu Z."/>
            <person name="Coulson A."/>
            <person name="Vaudin M."/>
            <person name="Sulston J.E."/>
            <person name="Durbin R.M."/>
            <person name="Hubbard T."/>
            <person name="Wooster R."/>
            <person name="Dunham I."/>
            <person name="Carter N.P."/>
            <person name="McVean G."/>
            <person name="Ross M.T."/>
            <person name="Harrow J."/>
            <person name="Olson M.V."/>
            <person name="Beck S."/>
            <person name="Rogers J."/>
            <person name="Bentley D.R."/>
        </authorList>
    </citation>
    <scope>NUCLEOTIDE SEQUENCE [LARGE SCALE GENOMIC DNA]</scope>
</reference>
<reference key="6">
    <citation type="submission" date="2005-07" db="EMBL/GenBank/DDBJ databases">
        <authorList>
            <person name="Mural R.J."/>
            <person name="Istrail S."/>
            <person name="Sutton G.G."/>
            <person name="Florea L."/>
            <person name="Halpern A.L."/>
            <person name="Mobarry C.M."/>
            <person name="Lippert R."/>
            <person name="Walenz B."/>
            <person name="Shatkay H."/>
            <person name="Dew I."/>
            <person name="Miller J.R."/>
            <person name="Flanigan M.J."/>
            <person name="Edwards N.J."/>
            <person name="Bolanos R."/>
            <person name="Fasulo D."/>
            <person name="Halldorsson B.V."/>
            <person name="Hannenhalli S."/>
            <person name="Turner R."/>
            <person name="Yooseph S."/>
            <person name="Lu F."/>
            <person name="Nusskern D.R."/>
            <person name="Shue B.C."/>
            <person name="Zheng X.H."/>
            <person name="Zhong F."/>
            <person name="Delcher A.L."/>
            <person name="Huson D.H."/>
            <person name="Kravitz S.A."/>
            <person name="Mouchard L."/>
            <person name="Reinert K."/>
            <person name="Remington K.A."/>
            <person name="Clark A.G."/>
            <person name="Waterman M.S."/>
            <person name="Eichler E.E."/>
            <person name="Adams M.D."/>
            <person name="Hunkapiller M.W."/>
            <person name="Myers E.W."/>
            <person name="Venter J.C."/>
        </authorList>
    </citation>
    <scope>NUCLEOTIDE SEQUENCE [LARGE SCALE GENOMIC DNA]</scope>
</reference>
<reference key="7">
    <citation type="journal article" date="2004" name="Genome Res.">
        <title>The status, quality, and expansion of the NIH full-length cDNA project: the Mammalian Gene Collection (MGC).</title>
        <authorList>
            <consortium name="The MGC Project Team"/>
        </authorList>
    </citation>
    <scope>NUCLEOTIDE SEQUENCE [LARGE SCALE MRNA] (ISOFORM 1)</scope>
    <source>
        <tissue>Lung</tissue>
    </source>
</reference>
<reference key="8">
    <citation type="journal article" date="2003" name="Prostate">
        <title>TERE1, a novel gene affecting growth regulation in prostate carcinoma.</title>
        <authorList>
            <person name="McGarvey T.W."/>
            <person name="Nguyen T."/>
            <person name="Puthiyaveettil R."/>
            <person name="Tomaszewski J.E."/>
            <person name="Malkowicz S.B."/>
        </authorList>
    </citation>
    <scope>INVOLVEMENT IN CARCINOMA</scope>
    <scope>SUBCELLULAR LOCATION</scope>
</reference>
<reference key="9">
    <citation type="journal article" date="2009" name="Anal. Chem.">
        <title>Lys-N and trypsin cover complementary parts of the phosphoproteome in a refined SCX-based approach.</title>
        <authorList>
            <person name="Gauci S."/>
            <person name="Helbig A.O."/>
            <person name="Slijper M."/>
            <person name="Krijgsveld J."/>
            <person name="Heck A.J."/>
            <person name="Mohammed S."/>
        </authorList>
    </citation>
    <scope>ACETYLATION [LARGE SCALE ANALYSIS] AT ALA-2</scope>
    <scope>CLEAVAGE OF INITIATOR METHIONINE [LARGE SCALE ANALYSIS]</scope>
    <scope>IDENTIFICATION BY MASS SPECTROMETRY [LARGE SCALE ANALYSIS]</scope>
</reference>
<reference key="10">
    <citation type="journal article" date="2010" name="Nature">
        <title>Identification of UBIAD1 as a novel human menaquinone-4 biosynthetic enzyme.</title>
        <authorList>
            <person name="Nakagawa K."/>
            <person name="Hirota Y."/>
            <person name="Sawada N."/>
            <person name="Yuge N."/>
            <person name="Watanabe M."/>
            <person name="Uchino Y."/>
            <person name="Okuda N."/>
            <person name="Shimomura Y."/>
            <person name="Suhara Y."/>
            <person name="Okano T."/>
        </authorList>
    </citation>
    <scope>FUNCTION</scope>
    <scope>CATALYTIC ACTIVITY</scope>
    <scope>PATHWAY</scope>
    <scope>SUBCELLULAR LOCATION</scope>
</reference>
<reference key="11">
    <citation type="journal article" date="2012" name="Mol. Cell. Proteomics">
        <title>Comparative large-scale characterisation of plant vs. mammal proteins reveals similar and idiosyncratic N-alpha acetylation features.</title>
        <authorList>
            <person name="Bienvenut W.V."/>
            <person name="Sumpton D."/>
            <person name="Martinez A."/>
            <person name="Lilla S."/>
            <person name="Espagne C."/>
            <person name="Meinnel T."/>
            <person name="Giglione C."/>
        </authorList>
    </citation>
    <scope>ACETYLATION [LARGE SCALE ANALYSIS] AT ALA-2</scope>
    <scope>CLEAVAGE OF INITIATOR METHIONINE [LARGE SCALE ANALYSIS]</scope>
    <scope>IDENTIFICATION BY MASS SPECTROMETRY [LARGE SCALE ANALYSIS]</scope>
</reference>
<reference key="12">
    <citation type="journal article" date="2013" name="Cell">
        <title>Ubiad1 is an antioxidant enzyme that regulates eNOS activity by CoQ10 synthesis.</title>
        <authorList>
            <person name="Mugoni V."/>
            <person name="Postel R."/>
            <person name="Catanzaro V."/>
            <person name="De Luca E."/>
            <person name="Turco E."/>
            <person name="Digilio G."/>
            <person name="Silengo L."/>
            <person name="Murphy M.P."/>
            <person name="Medana C."/>
            <person name="Stainier D.Y."/>
            <person name="Bakkers J."/>
            <person name="Santoro M.M."/>
        </authorList>
    </citation>
    <scope>FUNCTION</scope>
    <scope>SUBCELLULAR LOCATION</scope>
    <scope>CATALYTIC ACTIVITY</scope>
    <scope>CHARACTERIZATION OF VARIANTS SCCD SER-102 AND GLY-112</scope>
</reference>
<reference key="13">
    <citation type="journal article" date="2007" name="Invest. Ophthalmol. Vis. Sci.">
        <title>Mutations in the UBIAD1 gene on chromosome short arm 1, region 36, cause Schnyder crystalline corneal dystrophy.</title>
        <authorList>
            <person name="Weiss J.S."/>
            <person name="Kruth H.S."/>
            <person name="Kuivaniemi H."/>
            <person name="Tromp G."/>
            <person name="White P.S."/>
            <person name="Winters R.S."/>
            <person name="Lisch W."/>
            <person name="Henn W."/>
            <person name="Denninger E."/>
            <person name="Krause M."/>
            <person name="Wasson P."/>
            <person name="Ebenezer N."/>
            <person name="Mahurkar S."/>
            <person name="Nickerson M.L."/>
        </authorList>
    </citation>
    <scope>VARIANTS SCCD SER-102 AND ARG-177</scope>
</reference>
<reference key="14">
    <citation type="journal article" date="2007" name="PLoS ONE">
        <title>Mutations in the UBIAD1 gene, encoding a potential prenyltransferase, are causal for Schnyder crystalline corneal dystrophy.</title>
        <authorList>
            <person name="Orr A."/>
            <person name="Dube M.-P."/>
            <person name="Marcadier J."/>
            <person name="Jiang H."/>
            <person name="Federico A."/>
            <person name="George S."/>
            <person name="Seamone C."/>
            <person name="Andrews D."/>
            <person name="Dubord P."/>
            <person name="Holland S."/>
            <person name="Provost S."/>
            <person name="Mongrain V."/>
            <person name="Evans S."/>
            <person name="Higgins B."/>
            <person name="Bowman S."/>
            <person name="Guernsey D."/>
            <person name="Samuels M."/>
        </authorList>
    </citation>
    <scope>VARIANTS SCCD SER-102; GLY-112; GLY-119; ILE-175 AND SER-232</scope>
    <scope>VARIANT PHE-75</scope>
</reference>
<reference key="15">
    <citation type="journal article" date="2008" name="Am. J. Med. Genet. A">
        <title>Genetic analysis of 14 families with Schnyder crystalline corneal dystrophy reveals clues to UBIAD1 protein function.</title>
        <authorList>
            <person name="Weiss J.S."/>
            <person name="Kruth H.S."/>
            <person name="Kuivaniemi H."/>
            <person name="Tromp G."/>
            <person name="Karkera J."/>
            <person name="Mahurkar S."/>
            <person name="Lisch W."/>
            <person name="Dupps W.J. Jr."/>
            <person name="White P.S."/>
            <person name="Winters R.S."/>
            <person name="Kim C."/>
            <person name="Rapuano C.J."/>
            <person name="Sutphin J."/>
            <person name="Reidy J."/>
            <person name="Hu F.-R."/>
            <person name="Lu da W."/>
            <person name="Ebenezer N."/>
            <person name="Nickerson M.L."/>
        </authorList>
    </citation>
    <scope>VARIANTS SCCD SER-102; GLY-118; PHE-121; PRO-171; ILE-175; ARG-177; ARG-186 AND GLU-236</scope>
</reference>
<reference key="16">
    <citation type="journal article" date="2009" name="Br. J. Ophthalmol.">
        <title>Surgical management and genetic analysis of a Chinese family with the S171P mutation in the UBIAD1 gene, the gene for Schnyder corneal dystrophy.</title>
        <authorList>
            <person name="Mehta J.S."/>
            <person name="Vithana E.N."/>
            <person name="Venkataraman D."/>
            <person name="Venkatraman A."/>
            <person name="Yong V.H."/>
            <person name="Aung T."/>
            <person name="Tan D.T."/>
        </authorList>
    </citation>
    <scope>VARIANT SCCD PRO-171</scope>
</reference>
<reference key="17">
    <citation type="journal article" date="2009" name="Mol. Vis.">
        <title>A novel UBIAD1 mutation identified in a Chinese family with Schnyder crystalline corneal dystrophy.</title>
        <authorList>
            <person name="Jing Y."/>
            <person name="Liu C."/>
            <person name="Xu J."/>
            <person name="Wang L."/>
        </authorList>
    </citation>
    <scope>VARIANT SCCD SER-98</scope>
</reference>
<reference key="18">
    <citation type="journal article" date="2010" name="Cornea">
        <title>Newly reported p.Asp240Asn mutation in UBIAD1 suggests central discoid corneal dystrophy is a variant of Schnyder corneal dystrophy.</title>
        <authorList>
            <person name="Weiss J.S."/>
            <person name="Wiaux C."/>
            <person name="Yellore V."/>
            <person name="Raber I."/>
            <person name="Eagle R."/>
            <person name="Mequio M."/>
            <person name="Aldave A."/>
        </authorList>
    </citation>
    <scope>VARIANT SCCD ASN-240</scope>
</reference>
<reference key="19">
    <citation type="journal article" date="2010" name="PLoS ONE">
        <title>UBIAD1 mutation alters a mitochondrial prenyltransferase to cause Schnyder corneal dystrophy.</title>
        <authorList>
            <person name="Nickerson M.L."/>
            <person name="Kostiha B.N."/>
            <person name="Brandt W."/>
            <person name="Fredericks W."/>
            <person name="Xu K.P."/>
            <person name="Yu F.S."/>
            <person name="Gold B."/>
            <person name="Chodosh J."/>
            <person name="Goldberg M."/>
            <person name="Lu da W."/>
            <person name="Yamada M."/>
            <person name="Tervo T.M."/>
            <person name="Grutzmacher R."/>
            <person name="Croasdale C."/>
            <person name="Hoeltzenbein M."/>
            <person name="Sutphin J."/>
            <person name="Malkowicz S.B."/>
            <person name="Wessjohann L."/>
            <person name="Kruth H.S."/>
            <person name="Dean M."/>
            <person name="Weiss J.S."/>
        </authorList>
    </citation>
    <scope>VARIANTS SCCD THR-97; SER-102; ASN-112; GLY-122; GLU-122 AND HIS-188</scope>
    <scope>SUBCELLULAR LOCATION</scope>
</reference>
<reference key="20">
    <citation type="journal article" date="2013" name="Hum. Mutat.">
        <title>The UBIAD1 prenyltransferase links menaquione-4 synthesis to cholesterol metabolic enzymes.</title>
        <authorList>
            <person name="Nickerson M.L."/>
            <person name="Bosley A.D."/>
            <person name="Weiss J.S."/>
            <person name="Kostiha B.N."/>
            <person name="Hirota Y."/>
            <person name="Brandt W."/>
            <person name="Esposito D."/>
            <person name="Kinoshita S."/>
            <person name="Wessjohann L."/>
            <person name="Morham S.G."/>
            <person name="Andresson T."/>
            <person name="Kruth H.S."/>
            <person name="Okano T."/>
            <person name="Dean M."/>
        </authorList>
    </citation>
    <scope>VARIANT GLU-177</scope>
    <scope>CHARACTERIZATION OF VARIANTS SCCD SER-102; ASN-112; GLU-177 AND ARG-177</scope>
    <scope>INTERACTION WITH HMGCR AND SOAT1</scope>
</reference>
<name>UBIA1_HUMAN</name>
<evidence type="ECO:0000255" key="1"/>
<evidence type="ECO:0000269" key="2">
    <source>
    </source>
</evidence>
<evidence type="ECO:0000269" key="3">
    <source>
    </source>
</evidence>
<evidence type="ECO:0000269" key="4">
    <source>
    </source>
</evidence>
<evidence type="ECO:0000269" key="5">
    <source>
    </source>
</evidence>
<evidence type="ECO:0000269" key="6">
    <source>
    </source>
</evidence>
<evidence type="ECO:0000269" key="7">
    <source>
    </source>
</evidence>
<evidence type="ECO:0000269" key="8">
    <source>
    </source>
</evidence>
<evidence type="ECO:0000269" key="9">
    <source>
    </source>
</evidence>
<evidence type="ECO:0000269" key="10">
    <source>
    </source>
</evidence>
<evidence type="ECO:0000269" key="11">
    <source>
    </source>
</evidence>
<evidence type="ECO:0000269" key="12">
    <source>
    </source>
</evidence>
<evidence type="ECO:0000269" key="13">
    <source>
    </source>
</evidence>
<evidence type="ECO:0000303" key="14">
    <source>
    </source>
</evidence>
<evidence type="ECO:0000303" key="15">
    <source>
    </source>
</evidence>
<evidence type="ECO:0000305" key="16"/>
<evidence type="ECO:0000305" key="17">
    <source>
    </source>
</evidence>
<evidence type="ECO:0000305" key="18">
    <source>
    </source>
</evidence>
<evidence type="ECO:0000305" key="19">
    <source>
    </source>
</evidence>
<evidence type="ECO:0000312" key="20">
    <source>
        <dbReference type="HGNC" id="HGNC:30791"/>
    </source>
</evidence>
<evidence type="ECO:0007744" key="21">
    <source>
    </source>
</evidence>
<evidence type="ECO:0007744" key="22">
    <source>
    </source>
</evidence>
<proteinExistence type="evidence at protein level"/>
<accession>Q9Y5Z9</accession>
<accession>B3KQG3</accession>
<accession>Q53GX3</accession>
<accession>Q5THD4</accession>
<protein>
    <recommendedName>
        <fullName>UbiA prenyltransferase domain-containing protein 1</fullName>
        <ecNumber evidence="11">2.5.1.-</ecNumber>
        <ecNumber evidence="19">2.5.1.39</ecNumber>
    </recommendedName>
    <alternativeName>
        <fullName evidence="14">Transitional epithelial response protein 1</fullName>
    </alternativeName>
</protein>
<organism>
    <name type="scientific">Homo sapiens</name>
    <name type="common">Human</name>
    <dbReference type="NCBI Taxonomy" id="9606"/>
    <lineage>
        <taxon>Eukaryota</taxon>
        <taxon>Metazoa</taxon>
        <taxon>Chordata</taxon>
        <taxon>Craniata</taxon>
        <taxon>Vertebrata</taxon>
        <taxon>Euteleostomi</taxon>
        <taxon>Mammalia</taxon>
        <taxon>Eutheria</taxon>
        <taxon>Euarchontoglires</taxon>
        <taxon>Primates</taxon>
        <taxon>Haplorrhini</taxon>
        <taxon>Catarrhini</taxon>
        <taxon>Hominidae</taxon>
        <taxon>Homo</taxon>
    </lineage>
</organism>
<gene>
    <name evidence="15 20" type="primary">UBIAD1</name>
    <name evidence="14" type="synonym">TERE1</name>
</gene>
<dbReference type="EC" id="2.5.1.-" evidence="11"/>
<dbReference type="EC" id="2.5.1.39" evidence="19"/>
<dbReference type="EMBL" id="AF117064">
    <property type="protein sequence ID" value="AAD27581.1"/>
    <property type="molecule type" value="mRNA"/>
</dbReference>
<dbReference type="EMBL" id="BT006832">
    <property type="protein sequence ID" value="AAP35478.1"/>
    <property type="molecule type" value="mRNA"/>
</dbReference>
<dbReference type="EMBL" id="AK222808">
    <property type="protein sequence ID" value="BAD96528.1"/>
    <property type="molecule type" value="mRNA"/>
</dbReference>
<dbReference type="EMBL" id="AK074890">
    <property type="protein sequence ID" value="BAG52025.1"/>
    <property type="molecule type" value="mRNA"/>
</dbReference>
<dbReference type="EMBL" id="AL031291">
    <property type="status" value="NOT_ANNOTATED_CDS"/>
    <property type="molecule type" value="Genomic_DNA"/>
</dbReference>
<dbReference type="EMBL" id="CH471130">
    <property type="protein sequence ID" value="EAW71686.1"/>
    <property type="molecule type" value="Genomic_DNA"/>
</dbReference>
<dbReference type="EMBL" id="BC004468">
    <property type="protein sequence ID" value="AAH04468.1"/>
    <property type="molecule type" value="mRNA"/>
</dbReference>
<dbReference type="CCDS" id="CCDS129.1">
    <molecule id="Q9Y5Z9-1"/>
</dbReference>
<dbReference type="CCDS" id="CCDS81260.1">
    <molecule id="Q9Y5Z9-2"/>
</dbReference>
<dbReference type="RefSeq" id="NP_001317279.1">
    <molecule id="Q9Y5Z9-2"/>
    <property type="nucleotide sequence ID" value="NM_001330350.2"/>
</dbReference>
<dbReference type="RefSeq" id="NP_037451.1">
    <molecule id="Q9Y5Z9-1"/>
    <property type="nucleotide sequence ID" value="NM_013319.3"/>
</dbReference>
<dbReference type="SMR" id="Q9Y5Z9"/>
<dbReference type="BioGRID" id="118958">
    <property type="interactions" value="124"/>
</dbReference>
<dbReference type="FunCoup" id="Q9Y5Z9">
    <property type="interactions" value="2740"/>
</dbReference>
<dbReference type="IntAct" id="Q9Y5Z9">
    <property type="interactions" value="62"/>
</dbReference>
<dbReference type="MINT" id="Q9Y5Z9"/>
<dbReference type="STRING" id="9606.ENSP00000366006"/>
<dbReference type="DrugBank" id="DB01022">
    <property type="generic name" value="Phylloquinone"/>
</dbReference>
<dbReference type="iPTMnet" id="Q9Y5Z9"/>
<dbReference type="PhosphoSitePlus" id="Q9Y5Z9"/>
<dbReference type="SwissPalm" id="Q9Y5Z9"/>
<dbReference type="BioMuta" id="UBIAD1"/>
<dbReference type="DMDM" id="74753514"/>
<dbReference type="jPOST" id="Q9Y5Z9"/>
<dbReference type="MassIVE" id="Q9Y5Z9"/>
<dbReference type="PaxDb" id="9606-ENSP00000366006"/>
<dbReference type="PeptideAtlas" id="Q9Y5Z9"/>
<dbReference type="ProteomicsDB" id="86555">
    <molecule id="Q9Y5Z9-1"/>
</dbReference>
<dbReference type="ProteomicsDB" id="86556">
    <molecule id="Q9Y5Z9-2"/>
</dbReference>
<dbReference type="Pumba" id="Q9Y5Z9"/>
<dbReference type="Antibodypedia" id="13750">
    <property type="antibodies" value="113 antibodies from 24 providers"/>
</dbReference>
<dbReference type="DNASU" id="29914"/>
<dbReference type="Ensembl" id="ENST00000376804.2">
    <molecule id="Q9Y5Z9-2"/>
    <property type="protein sequence ID" value="ENSP00000366000.1"/>
    <property type="gene ID" value="ENSG00000120942.14"/>
</dbReference>
<dbReference type="Ensembl" id="ENST00000376810.6">
    <molecule id="Q9Y5Z9-1"/>
    <property type="protein sequence ID" value="ENSP00000366006.5"/>
    <property type="gene ID" value="ENSG00000120942.14"/>
</dbReference>
<dbReference type="GeneID" id="29914"/>
<dbReference type="KEGG" id="hsa:29914"/>
<dbReference type="MANE-Select" id="ENST00000376810.6">
    <property type="protein sequence ID" value="ENSP00000366006.5"/>
    <property type="RefSeq nucleotide sequence ID" value="NM_013319.3"/>
    <property type="RefSeq protein sequence ID" value="NP_037451.1"/>
</dbReference>
<dbReference type="UCSC" id="uc001asg.4">
    <molecule id="Q9Y5Z9-1"/>
    <property type="organism name" value="human"/>
</dbReference>
<dbReference type="AGR" id="HGNC:30791"/>
<dbReference type="CTD" id="29914"/>
<dbReference type="DisGeNET" id="29914"/>
<dbReference type="GeneCards" id="UBIAD1"/>
<dbReference type="HGNC" id="HGNC:30791">
    <property type="gene designation" value="UBIAD1"/>
</dbReference>
<dbReference type="HPA" id="ENSG00000120942">
    <property type="expression patterns" value="Low tissue specificity"/>
</dbReference>
<dbReference type="MalaCards" id="UBIAD1"/>
<dbReference type="MIM" id="121800">
    <property type="type" value="phenotype"/>
</dbReference>
<dbReference type="MIM" id="611632">
    <property type="type" value="gene"/>
</dbReference>
<dbReference type="neXtProt" id="NX_Q9Y5Z9"/>
<dbReference type="OpenTargets" id="ENSG00000120942"/>
<dbReference type="Orphanet" id="98967">
    <property type="disease" value="Schnyder corneal dystrophy"/>
</dbReference>
<dbReference type="PharmGKB" id="PA142670660"/>
<dbReference type="VEuPathDB" id="HostDB:ENSG00000120942"/>
<dbReference type="eggNOG" id="KOG4581">
    <property type="taxonomic scope" value="Eukaryota"/>
</dbReference>
<dbReference type="GeneTree" id="ENSGT00390000012439"/>
<dbReference type="HOGENOM" id="CLU_043611_0_0_1"/>
<dbReference type="InParanoid" id="Q9Y5Z9"/>
<dbReference type="OMA" id="QWIEGAR"/>
<dbReference type="OrthoDB" id="203513at2759"/>
<dbReference type="PAN-GO" id="Q9Y5Z9">
    <property type="GO annotations" value="6 GO annotations based on evolutionary models"/>
</dbReference>
<dbReference type="PhylomeDB" id="Q9Y5Z9"/>
<dbReference type="TreeFam" id="TF323238"/>
<dbReference type="BioCyc" id="MetaCyc:ENSG00000120942-MONOMER"/>
<dbReference type="PathwayCommons" id="Q9Y5Z9"/>
<dbReference type="Reactome" id="R-HSA-6806664">
    <property type="pathway name" value="Metabolism of vitamin K"/>
</dbReference>
<dbReference type="SignaLink" id="Q9Y5Z9"/>
<dbReference type="SIGNOR" id="Q9Y5Z9"/>
<dbReference type="UniPathway" id="UPA00079"/>
<dbReference type="UniPathway" id="UPA00232"/>
<dbReference type="BioGRID-ORCS" id="29914">
    <property type="hits" value="185 hits in 1166 CRISPR screens"/>
</dbReference>
<dbReference type="ChiTaRS" id="UBIAD1">
    <property type="organism name" value="human"/>
</dbReference>
<dbReference type="GeneWiki" id="UBIAD1"/>
<dbReference type="GenomeRNAi" id="29914"/>
<dbReference type="Pharos" id="Q9Y5Z9">
    <property type="development level" value="Tbio"/>
</dbReference>
<dbReference type="PRO" id="PR:Q9Y5Z9"/>
<dbReference type="Proteomes" id="UP000005640">
    <property type="component" value="Chromosome 1"/>
</dbReference>
<dbReference type="RNAct" id="Q9Y5Z9">
    <property type="molecule type" value="protein"/>
</dbReference>
<dbReference type="Bgee" id="ENSG00000120942">
    <property type="expression patterns" value="Expressed in gastrocnemius and 164 other cell types or tissues"/>
</dbReference>
<dbReference type="ExpressionAtlas" id="Q9Y5Z9">
    <property type="expression patterns" value="baseline and differential"/>
</dbReference>
<dbReference type="GO" id="GO:0005737">
    <property type="term" value="C:cytoplasm"/>
    <property type="evidence" value="ECO:0000314"/>
    <property type="project" value="UniProtKB"/>
</dbReference>
<dbReference type="GO" id="GO:0005783">
    <property type="term" value="C:endoplasmic reticulum"/>
    <property type="evidence" value="ECO:0000314"/>
    <property type="project" value="UniProtKB"/>
</dbReference>
<dbReference type="GO" id="GO:0005789">
    <property type="term" value="C:endoplasmic reticulum membrane"/>
    <property type="evidence" value="ECO:0000304"/>
    <property type="project" value="Reactome"/>
</dbReference>
<dbReference type="GO" id="GO:0000139">
    <property type="term" value="C:Golgi membrane"/>
    <property type="evidence" value="ECO:0000314"/>
    <property type="project" value="UniProtKB"/>
</dbReference>
<dbReference type="GO" id="GO:0016020">
    <property type="term" value="C:membrane"/>
    <property type="evidence" value="ECO:0000314"/>
    <property type="project" value="UniProtKB"/>
</dbReference>
<dbReference type="GO" id="GO:0031966">
    <property type="term" value="C:mitochondrial membrane"/>
    <property type="evidence" value="ECO:0007669"/>
    <property type="project" value="UniProtKB-SubCell"/>
</dbReference>
<dbReference type="GO" id="GO:0005634">
    <property type="term" value="C:nucleus"/>
    <property type="evidence" value="ECO:0000314"/>
    <property type="project" value="UniProtKB"/>
</dbReference>
<dbReference type="GO" id="GO:0016209">
    <property type="term" value="F:antioxidant activity"/>
    <property type="evidence" value="ECO:0000315"/>
    <property type="project" value="UniProtKB"/>
</dbReference>
<dbReference type="GO" id="GO:0004659">
    <property type="term" value="F:prenyltransferase activity"/>
    <property type="evidence" value="ECO:0000314"/>
    <property type="project" value="UniProtKB"/>
</dbReference>
<dbReference type="GO" id="GO:0009234">
    <property type="term" value="P:menaquinone biosynthetic process"/>
    <property type="evidence" value="ECO:0000315"/>
    <property type="project" value="UniProtKB"/>
</dbReference>
<dbReference type="GO" id="GO:0042374">
    <property type="term" value="P:phylloquinone metabolic process"/>
    <property type="evidence" value="ECO:0007669"/>
    <property type="project" value="Ensembl"/>
</dbReference>
<dbReference type="GO" id="GO:0006744">
    <property type="term" value="P:ubiquinone biosynthetic process"/>
    <property type="evidence" value="ECO:0000315"/>
    <property type="project" value="UniProtKB"/>
</dbReference>
<dbReference type="GO" id="GO:0042371">
    <property type="term" value="P:vitamin K biosynthetic process"/>
    <property type="evidence" value="ECO:0000314"/>
    <property type="project" value="UniProtKB"/>
</dbReference>
<dbReference type="GO" id="GO:0042373">
    <property type="term" value="P:vitamin K metabolic process"/>
    <property type="evidence" value="ECO:0000304"/>
    <property type="project" value="Reactome"/>
</dbReference>
<dbReference type="CDD" id="cd13962">
    <property type="entry name" value="PT_UbiA_UBIAD1"/>
    <property type="match status" value="1"/>
</dbReference>
<dbReference type="FunFam" id="1.10.357.140:FF:000005">
    <property type="entry name" value="UbiA prenyltransferase domain-containing protein 1"/>
    <property type="match status" value="1"/>
</dbReference>
<dbReference type="Gene3D" id="1.10.357.140">
    <property type="entry name" value="UbiA prenyltransferase"/>
    <property type="match status" value="1"/>
</dbReference>
<dbReference type="InterPro" id="IPR000537">
    <property type="entry name" value="UbiA_prenyltransferase"/>
</dbReference>
<dbReference type="InterPro" id="IPR044878">
    <property type="entry name" value="UbiA_sf"/>
</dbReference>
<dbReference type="InterPro" id="IPR026046">
    <property type="entry name" value="UBIAD1"/>
</dbReference>
<dbReference type="PANTHER" id="PTHR13929">
    <property type="entry name" value="1,4-DIHYDROXY-2-NAPHTHOATE OCTAPRENYLTRANSFERASE"/>
    <property type="match status" value="1"/>
</dbReference>
<dbReference type="PANTHER" id="PTHR13929:SF0">
    <property type="entry name" value="UBIA PRENYLTRANSFERASE DOMAIN-CONTAINING PROTEIN 1"/>
    <property type="match status" value="1"/>
</dbReference>
<dbReference type="Pfam" id="PF01040">
    <property type="entry name" value="UbiA"/>
    <property type="match status" value="1"/>
</dbReference>
<dbReference type="PIRSF" id="PIRSF005355">
    <property type="entry name" value="UBIAD1"/>
    <property type="match status" value="1"/>
</dbReference>
<keyword id="KW-0007">Acetylation</keyword>
<keyword id="KW-0025">Alternative splicing</keyword>
<keyword id="KW-1212">Corneal dystrophy</keyword>
<keyword id="KW-0963">Cytoplasm</keyword>
<keyword id="KW-0225">Disease variant</keyword>
<keyword id="KW-0256">Endoplasmic reticulum</keyword>
<keyword id="KW-0333">Golgi apparatus</keyword>
<keyword id="KW-0472">Membrane</keyword>
<keyword id="KW-0474">Menaquinone biosynthesis</keyword>
<keyword id="KW-0496">Mitochondrion</keyword>
<keyword id="KW-0539">Nucleus</keyword>
<keyword id="KW-0637">Prenyltransferase</keyword>
<keyword id="KW-1267">Proteomics identification</keyword>
<keyword id="KW-1185">Reference proteome</keyword>
<keyword id="KW-0808">Transferase</keyword>
<keyword id="KW-0812">Transmembrane</keyword>
<keyword id="KW-1133">Transmembrane helix</keyword>
<keyword id="KW-0831">Ubiquinone biosynthesis</keyword>
<feature type="initiator methionine" description="Removed" evidence="21 22">
    <location>
        <position position="1"/>
    </location>
</feature>
<feature type="chain" id="PRO_0000242627" description="UbiA prenyltransferase domain-containing protein 1">
    <location>
        <begin position="2"/>
        <end position="338"/>
    </location>
</feature>
<feature type="transmembrane region" description="Helical" evidence="1">
    <location>
        <begin position="83"/>
        <end position="103"/>
    </location>
</feature>
<feature type="transmembrane region" description="Helical" evidence="1">
    <location>
        <begin position="134"/>
        <end position="154"/>
    </location>
</feature>
<feature type="transmembrane region" description="Helical" evidence="1">
    <location>
        <begin position="160"/>
        <end position="180"/>
    </location>
</feature>
<feature type="transmembrane region" description="Helical" evidence="1">
    <location>
        <begin position="188"/>
        <end position="208"/>
    </location>
</feature>
<feature type="transmembrane region" description="Helical" evidence="1">
    <location>
        <begin position="209"/>
        <end position="229"/>
    </location>
</feature>
<feature type="transmembrane region" description="Helical" evidence="1">
    <location>
        <begin position="245"/>
        <end position="267"/>
    </location>
</feature>
<feature type="transmembrane region" description="Helical" evidence="1">
    <location>
        <begin position="277"/>
        <end position="297"/>
    </location>
</feature>
<feature type="transmembrane region" description="Helical" evidence="1">
    <location>
        <begin position="315"/>
        <end position="335"/>
    </location>
</feature>
<feature type="modified residue" description="N-acetylalanine" evidence="21 22">
    <location>
        <position position="2"/>
    </location>
</feature>
<feature type="splice variant" id="VSP_019455" description="In isoform 2." evidence="16">
    <original>GIG</original>
    <variation>VLI</variation>
    <location>
        <begin position="177"/>
        <end position="179"/>
    </location>
</feature>
<feature type="splice variant" id="VSP_019456" description="In isoform 2." evidence="16">
    <location>
        <begin position="180"/>
        <end position="338"/>
    </location>
</feature>
<feature type="sequence variant" id="VAR_043713" description="In dbSNP:rs114000606." evidence="4">
    <original>S</original>
    <variation>F</variation>
    <location>
        <position position="75"/>
    </location>
</feature>
<feature type="sequence variant" id="VAR_064337" description="In SCCD." evidence="10">
    <original>A</original>
    <variation>T</variation>
    <location>
        <position position="97"/>
    </location>
</feature>
<feature type="sequence variant" id="VAR_064338" description="In SCCD." evidence="8">
    <original>G</original>
    <variation>S</variation>
    <location>
        <position position="98"/>
    </location>
</feature>
<feature type="sequence variant" id="VAR_043714" description="In SCCD; reduced menaquinone-4 (MK-4) synthesis; does not affect coenzyme Q10 synthesis; dbSNP:rs118203945." evidence="4 5 6 10 12 13">
    <original>N</original>
    <variation>S</variation>
    <location>
        <position position="102"/>
    </location>
</feature>
<feature type="sequence variant" id="VAR_043715" description="In SCCD; does not affect coenzyme Q10 synthesis; dbSNP:rs118203950." evidence="4 13">
    <original>D</original>
    <variation>G</variation>
    <location>
        <position position="112"/>
    </location>
</feature>
<feature type="sequence variant" id="VAR_064339" description="In SCCD; reduced menaquinone-4 (MK-4) synthesis." evidence="10 12">
    <original>D</original>
    <variation>N</variation>
    <location>
        <position position="112"/>
    </location>
</feature>
<feature type="sequence variant" id="VAR_043716" description="In SCCD." evidence="6">
    <original>D</original>
    <variation>G</variation>
    <location>
        <position position="118"/>
    </location>
</feature>
<feature type="sequence variant" id="VAR_043717" description="In SCCD; dbSNP:rs118203947." evidence="4">
    <original>R</original>
    <variation>G</variation>
    <location>
        <position position="119"/>
    </location>
</feature>
<feature type="sequence variant" id="VAR_043718" description="In SCCD." evidence="6">
    <original>L</original>
    <variation>F</variation>
    <location>
        <position position="121"/>
    </location>
</feature>
<feature type="sequence variant" id="VAR_064340" description="In SCCD." evidence="10">
    <original>V</original>
    <variation>E</variation>
    <location>
        <position position="122"/>
    </location>
</feature>
<feature type="sequence variant" id="VAR_064341" description="In SCCD." evidence="10">
    <original>V</original>
    <variation>G</variation>
    <location>
        <position position="122"/>
    </location>
</feature>
<feature type="sequence variant" id="VAR_043719" description="In SCCD; dbSNP:rs118203951." evidence="6 7">
    <original>S</original>
    <variation>P</variation>
    <location>
        <position position="171"/>
    </location>
</feature>
<feature type="sequence variant" id="VAR_043720" description="In SCCD; dbSNP:rs118203948." evidence="4 6">
    <original>T</original>
    <variation>I</variation>
    <location>
        <position position="175"/>
    </location>
</feature>
<feature type="sequence variant" id="VAR_069267" description="In SCCD; reduced menaquinone-4 (MK-4) synthesis; dbSNP:rs397514669." evidence="12">
    <original>G</original>
    <variation>E</variation>
    <location>
        <position position="177"/>
    </location>
</feature>
<feature type="sequence variant" id="VAR_043721" description="In SCCD; reduced menaquinone-4 (MK-4) synthesis; dbSNP:rs118203946." evidence="5 6 12">
    <original>G</original>
    <variation>R</variation>
    <location>
        <position position="177"/>
    </location>
</feature>
<feature type="sequence variant" id="VAR_043722" description="In SCCD; dbSNP:rs118203952." evidence="6">
    <original>G</original>
    <variation>R</variation>
    <location>
        <position position="186"/>
    </location>
</feature>
<feature type="sequence variant" id="VAR_064342" description="In SCCD." evidence="10">
    <original>L</original>
    <variation>H</variation>
    <location>
        <position position="188"/>
    </location>
</feature>
<feature type="sequence variant" id="VAR_043723" description="In SCCD; dbSNP:rs118203949." evidence="4">
    <original>N</original>
    <variation>S</variation>
    <location>
        <position position="232"/>
    </location>
</feature>
<feature type="sequence variant" id="VAR_043724" description="In SCCD; dbSNP:rs118203953." evidence="6">
    <original>D</original>
    <variation>E</variation>
    <location>
        <position position="236"/>
    </location>
</feature>
<feature type="sequence variant" id="VAR_064343" description="In SCCD; dbSNP:rs371811409." evidence="9">
    <original>D</original>
    <variation>N</variation>
    <location>
        <position position="240"/>
    </location>
</feature>
<feature type="sequence conflict" description="In Ref. 3; BAD96528." evidence="16" ref="3">
    <original>I</original>
    <variation>V</variation>
    <location>
        <position position="163"/>
    </location>
</feature>
<sequence>MAASQVLGEKINILSGETVKAGDRDPLGNDCPEQDRLPQRSWRQKCASYVLALRPWSFSASLTPVALGSALAYRSHGVLDPRLLVGCAVAVLAVHGAGNLVNTYYDFSKGIDHKKSDDRTLVDRILEPQDVVRFGVFLYTLGCVCAACLYYLSPLKLEHLALIYFGGLSGSFLYTGGIGFKYVALGDLIILITFGPLAVMFAYAIQVGSLAIFPLVYAIPLALSTEAILHSNNTRDMESDREAGIVTLAILIGPTFSYILYNTLLFLPYLVFSILATHCTISLALPLLTIPMAFSLERQFRSQAFNKLPQRTAKLNLLLGLFYVFGIILAPAGSLPKI</sequence>